<keyword id="KW-0121">Carboxypeptidase</keyword>
<keyword id="KW-1015">Disulfide bond</keyword>
<keyword id="KW-0325">Glycoprotein</keyword>
<keyword id="KW-0378">Hydrolase</keyword>
<keyword id="KW-0645">Protease</keyword>
<keyword id="KW-1185">Reference proteome</keyword>
<keyword id="KW-0964">Secreted</keyword>
<keyword id="KW-0732">Signal</keyword>
<keyword id="KW-0865">Zymogen</keyword>
<protein>
    <recommendedName>
        <fullName>Serine carboxypeptidase 24</fullName>
        <ecNumber>3.4.16.6</ecNumber>
    </recommendedName>
    <alternativeName>
        <fullName>Bri1 suppressor 1</fullName>
    </alternativeName>
    <alternativeName>
        <fullName>Carboxypeptidase D</fullName>
    </alternativeName>
    <alternativeName>
        <fullName>Serine carboxypeptidase II</fullName>
    </alternativeName>
    <component>
        <recommendedName>
            <fullName>Serine carboxypeptidase 24 chain A</fullName>
        </recommendedName>
        <alternativeName>
            <fullName>Serine carboxypeptidase II chain A</fullName>
        </alternativeName>
    </component>
    <component>
        <recommendedName>
            <fullName>Serine carboxypeptidase 24 chain B</fullName>
        </recommendedName>
        <alternativeName>
            <fullName>Serine carboxypeptidase II chain B</fullName>
        </alternativeName>
    </component>
</protein>
<evidence type="ECO:0000250" key="1"/>
<evidence type="ECO:0000255" key="2"/>
<evidence type="ECO:0000269" key="3">
    <source>
    </source>
</evidence>
<evidence type="ECO:0000269" key="4">
    <source>
    </source>
</evidence>
<evidence type="ECO:0000269" key="5">
    <source>
    </source>
</evidence>
<evidence type="ECO:0000305" key="6"/>
<dbReference type="EC" id="3.4.16.6"/>
<dbReference type="EMBL" id="AL161577">
    <property type="protein sequence ID" value="CAB79779.1"/>
    <property type="molecule type" value="Genomic_DNA"/>
</dbReference>
<dbReference type="EMBL" id="CP002687">
    <property type="protein sequence ID" value="AEE85786.1"/>
    <property type="molecule type" value="Genomic_DNA"/>
</dbReference>
<dbReference type="EMBL" id="BT002334">
    <property type="protein sequence ID" value="AAN86167.1"/>
    <property type="molecule type" value="mRNA"/>
</dbReference>
<dbReference type="EMBL" id="AF370198">
    <property type="protein sequence ID" value="AAK44013.1"/>
    <property type="molecule type" value="mRNA"/>
</dbReference>
<dbReference type="PIR" id="B85358">
    <property type="entry name" value="B85358"/>
</dbReference>
<dbReference type="RefSeq" id="NP_194790.1">
    <property type="nucleotide sequence ID" value="NM_119207.3"/>
</dbReference>
<dbReference type="SMR" id="Q9M099"/>
<dbReference type="BioGRID" id="14471">
    <property type="interactions" value="1"/>
</dbReference>
<dbReference type="FunCoup" id="Q9M099">
    <property type="interactions" value="9"/>
</dbReference>
<dbReference type="STRING" id="3702.Q9M099"/>
<dbReference type="ESTHER" id="arath-AT4g30610">
    <property type="family name" value="Carboxypeptidase_S10"/>
</dbReference>
<dbReference type="MEROPS" id="S10.015"/>
<dbReference type="GlyCosmos" id="Q9M099">
    <property type="glycosylation" value="6 sites, No reported glycans"/>
</dbReference>
<dbReference type="GlyGen" id="Q9M099">
    <property type="glycosylation" value="6 sites"/>
</dbReference>
<dbReference type="PaxDb" id="3702-AT4G30610.1"/>
<dbReference type="ProteomicsDB" id="232703"/>
<dbReference type="EnsemblPlants" id="AT4G30610.1">
    <property type="protein sequence ID" value="AT4G30610.1"/>
    <property type="gene ID" value="AT4G30610"/>
</dbReference>
<dbReference type="GeneID" id="829184"/>
<dbReference type="Gramene" id="AT4G30610.1">
    <property type="protein sequence ID" value="AT4G30610.1"/>
    <property type="gene ID" value="AT4G30610"/>
</dbReference>
<dbReference type="KEGG" id="ath:AT4G30610"/>
<dbReference type="Araport" id="AT4G30610"/>
<dbReference type="TAIR" id="AT4G30610">
    <property type="gene designation" value="BRS1"/>
</dbReference>
<dbReference type="eggNOG" id="KOG1282">
    <property type="taxonomic scope" value="Eukaryota"/>
</dbReference>
<dbReference type="HOGENOM" id="CLU_008523_13_0_1"/>
<dbReference type="InParanoid" id="Q9M099"/>
<dbReference type="OMA" id="QMAGWIV"/>
<dbReference type="OrthoDB" id="443318at2759"/>
<dbReference type="PhylomeDB" id="Q9M099"/>
<dbReference type="PRO" id="PR:Q9M099"/>
<dbReference type="Proteomes" id="UP000006548">
    <property type="component" value="Chromosome 4"/>
</dbReference>
<dbReference type="ExpressionAtlas" id="Q9M099">
    <property type="expression patterns" value="baseline and differential"/>
</dbReference>
<dbReference type="GO" id="GO:0005615">
    <property type="term" value="C:extracellular space"/>
    <property type="evidence" value="ECO:0000314"/>
    <property type="project" value="TAIR"/>
</dbReference>
<dbReference type="GO" id="GO:0004185">
    <property type="term" value="F:serine-type carboxypeptidase activity"/>
    <property type="evidence" value="ECO:0000314"/>
    <property type="project" value="TAIR"/>
</dbReference>
<dbReference type="GO" id="GO:0009742">
    <property type="term" value="P:brassinosteroid mediated signaling pathway"/>
    <property type="evidence" value="ECO:0000316"/>
    <property type="project" value="TAIR"/>
</dbReference>
<dbReference type="GO" id="GO:0006508">
    <property type="term" value="P:proteolysis"/>
    <property type="evidence" value="ECO:0000314"/>
    <property type="project" value="TAIR"/>
</dbReference>
<dbReference type="FunFam" id="3.40.50.11320:FF:000002">
    <property type="entry name" value="Carboxypeptidase"/>
    <property type="match status" value="1"/>
</dbReference>
<dbReference type="FunFam" id="3.40.50.1820:FF:000013">
    <property type="entry name" value="Carboxypeptidase"/>
    <property type="match status" value="1"/>
</dbReference>
<dbReference type="Gene3D" id="3.40.50.11320">
    <property type="match status" value="1"/>
</dbReference>
<dbReference type="Gene3D" id="6.10.250.940">
    <property type="match status" value="1"/>
</dbReference>
<dbReference type="Gene3D" id="3.40.50.1820">
    <property type="entry name" value="alpha/beta hydrolase"/>
    <property type="match status" value="1"/>
</dbReference>
<dbReference type="InterPro" id="IPR029058">
    <property type="entry name" value="AB_hydrolase_fold"/>
</dbReference>
<dbReference type="InterPro" id="IPR001563">
    <property type="entry name" value="Peptidase_S10"/>
</dbReference>
<dbReference type="InterPro" id="IPR033124">
    <property type="entry name" value="Ser_caboxypep_his_AS"/>
</dbReference>
<dbReference type="InterPro" id="IPR018202">
    <property type="entry name" value="Ser_caboxypep_ser_AS"/>
</dbReference>
<dbReference type="PANTHER" id="PTHR11802:SF25">
    <property type="entry name" value="SERINE CARBOXYPEPTIDASE 24"/>
    <property type="match status" value="1"/>
</dbReference>
<dbReference type="PANTHER" id="PTHR11802">
    <property type="entry name" value="SERINE PROTEASE FAMILY S10 SERINE CARBOXYPEPTIDASE"/>
    <property type="match status" value="1"/>
</dbReference>
<dbReference type="Pfam" id="PF00450">
    <property type="entry name" value="Peptidase_S10"/>
    <property type="match status" value="1"/>
</dbReference>
<dbReference type="PRINTS" id="PR00724">
    <property type="entry name" value="CRBOXYPTASEC"/>
</dbReference>
<dbReference type="SUPFAM" id="SSF53474">
    <property type="entry name" value="alpha/beta-Hydrolases"/>
    <property type="match status" value="1"/>
</dbReference>
<dbReference type="PROSITE" id="PS00560">
    <property type="entry name" value="CARBOXYPEPT_SER_HIS"/>
    <property type="match status" value="1"/>
</dbReference>
<dbReference type="PROSITE" id="PS00131">
    <property type="entry name" value="CARBOXYPEPT_SER_SER"/>
    <property type="match status" value="1"/>
</dbReference>
<comment type="function">
    <text evidence="3 5">Active serine carboxypeptidase with broad substrate preference, including basic and hydrophilic groups. Processes a protein involved in an early event in the brassinosteroid signaling pathway.</text>
</comment>
<comment type="catalytic activity">
    <reaction>
        <text>Preferential release of a C-terminal arginine or lysine residue.</text>
        <dbReference type="EC" id="3.4.16.6"/>
    </reaction>
</comment>
<comment type="activity regulation">
    <text evidence="5">Completely inhibited by phenylmethylsulfonyl fluoride (PMSF) and partially by leupeptin.</text>
</comment>
<comment type="biophysicochemical properties">
    <phDependence>
        <text evidence="5">Optimum pH is 5.5.</text>
    </phDependence>
    <temperatureDependence>
        <text evidence="5">Optimum temperature is 50 degrees Celsius.</text>
    </temperatureDependence>
</comment>
<comment type="subunit">
    <text evidence="6">Heterodimer.</text>
</comment>
<comment type="subcellular location">
    <subcellularLocation>
        <location evidence="5">Secreted</location>
        <location evidence="5">Extracellular space</location>
    </subcellularLocation>
</comment>
<comment type="tissue specificity">
    <text evidence="4 5">Expressed in shoots, leaves, cauline leaves, siliques and flowers. Expressed a low levels in roots and stems.</text>
</comment>
<comment type="PTM">
    <text evidence="5">N-glycosylated.</text>
</comment>
<comment type="miscellaneous">
    <text>Was isolated as a suppressor of bri1 mutant phenotype. The serine carboxypeptidase activity is necessary for suppression of bri1 mutant phenotype.</text>
</comment>
<comment type="similarity">
    <text evidence="6">Belongs to the peptidase S10 family.</text>
</comment>
<feature type="signal peptide" evidence="2">
    <location>
        <begin position="1"/>
        <end position="24"/>
    </location>
</feature>
<feature type="chain" id="PRO_0000004306" description="Serine carboxypeptidase 24 chain A" evidence="1">
    <location>
        <begin position="25"/>
        <end position="286"/>
    </location>
</feature>
<feature type="propeptide" id="PRO_0000004307" description="Linker peptide" evidence="1">
    <location>
        <begin position="287"/>
        <end position="316"/>
    </location>
</feature>
<feature type="chain" id="PRO_0000004308" description="Serine carboxypeptidase 24 chain B" evidence="1">
    <location>
        <begin position="317"/>
        <end position="465"/>
    </location>
</feature>
<feature type="active site" evidence="1">
    <location>
        <position position="181"/>
    </location>
</feature>
<feature type="active site" evidence="1">
    <location>
        <position position="386"/>
    </location>
</feature>
<feature type="active site" evidence="1">
    <location>
        <position position="438"/>
    </location>
</feature>
<feature type="glycosylation site" description="N-linked (GlcNAc...) asparagine" evidence="2">
    <location>
        <position position="54"/>
    </location>
</feature>
<feature type="glycosylation site" description="N-linked (GlcNAc...) asparagine" evidence="2">
    <location>
        <position position="105"/>
    </location>
</feature>
<feature type="glycosylation site" description="N-linked (GlcNAc...) asparagine" evidence="2">
    <location>
        <position position="139"/>
    </location>
</feature>
<feature type="glycosylation site" description="N-linked (GlcNAc...) asparagine" evidence="2">
    <location>
        <position position="250"/>
    </location>
</feature>
<feature type="glycosylation site" description="N-linked (GlcNAc...) asparagine" evidence="2">
    <location>
        <position position="293"/>
    </location>
</feature>
<feature type="glycosylation site" description="N-linked (GlcNAc...) asparagine" evidence="2">
    <location>
        <position position="338"/>
    </location>
</feature>
<feature type="disulfide bond" description="Interchain (between A and B chains)" evidence="1">
    <location>
        <begin position="88"/>
        <end position="349"/>
    </location>
</feature>
<feature type="disulfide bond" evidence="1">
    <location>
        <begin position="249"/>
        <end position="260"/>
    </location>
</feature>
<feature type="disulfide bond" description="Interchain (between A and B chains)" evidence="1">
    <location>
        <begin position="285"/>
        <end position="317"/>
    </location>
</feature>
<feature type="mutagenesis site" description="Loss of activity." evidence="3">
    <original>S</original>
    <variation>F</variation>
    <location>
        <position position="181"/>
    </location>
</feature>
<feature type="mutagenesis site" description="Loss of activity. Decrease in A and B chains cleavage efficiency." evidence="3 5">
    <original>H</original>
    <variation>A</variation>
    <location>
        <position position="438"/>
    </location>
</feature>
<feature type="sequence conflict" description="In Ref. 3; AAK44013." evidence="6" ref="3">
    <original>T</original>
    <variation>N</variation>
    <location>
        <position position="107"/>
    </location>
</feature>
<gene>
    <name type="primary">SCPL24</name>
    <name type="synonym">BRS1</name>
    <name type="ordered locus">At4g30610</name>
    <name type="ORF">F17I23.50</name>
</gene>
<organism>
    <name type="scientific">Arabidopsis thaliana</name>
    <name type="common">Mouse-ear cress</name>
    <dbReference type="NCBI Taxonomy" id="3702"/>
    <lineage>
        <taxon>Eukaryota</taxon>
        <taxon>Viridiplantae</taxon>
        <taxon>Streptophyta</taxon>
        <taxon>Embryophyta</taxon>
        <taxon>Tracheophyta</taxon>
        <taxon>Spermatophyta</taxon>
        <taxon>Magnoliopsida</taxon>
        <taxon>eudicotyledons</taxon>
        <taxon>Gunneridae</taxon>
        <taxon>Pentapetalae</taxon>
        <taxon>rosids</taxon>
        <taxon>malvids</taxon>
        <taxon>Brassicales</taxon>
        <taxon>Brassicaceae</taxon>
        <taxon>Camelineae</taxon>
        <taxon>Arabidopsis</taxon>
    </lineage>
</organism>
<proteinExistence type="evidence at protein level"/>
<accession>Q9M099</accession>
<accession>Q94K84</accession>
<sequence length="465" mass="52845">MARTHFIFLLLVALLSTTFPSSSSSREQEKDRIKALPGQPKVAFSQYSGYVNVNQSHGRALFYWLTESSSPSPHTKPLLLWLNGGPGCSSIAYGASEEIGPFRINKTGSNLYLNKFAWNKDANLLFLESPAGVGYSYTNTSSDLKDSGDERTAQDNLIFLIKWLSRFPQYKYRDFYIAGESYAGHYVPQLAKKINDYNKAFSKPIINLKGFLVGNAVTDNQYDSIGTVTYWWTHAIISDKSYKSILKYCNFTVERVSDDCDNAVNYAMNHEFGDIDQYSIYTPTCVAAQQKKNTTGFFVRMKNTLLRRRLVSGYDPCTESYAEKYFNRPDVQRAMHANVTGIRYKWTACSDVLIKTWKDSDKTMLPIYKELAASGLRIWIFSGDTDSVVPVTATRFSLSHLNLPVKTRWYPWYTDNQVGGWTEVYKGLTFATVRGAGHEVPLFEPKRALILFRSFLAGKELPRSY</sequence>
<name>SCP24_ARATH</name>
<reference key="1">
    <citation type="journal article" date="1999" name="Nature">
        <title>Sequence and analysis of chromosome 4 of the plant Arabidopsis thaliana.</title>
        <authorList>
            <person name="Mayer K.F.X."/>
            <person name="Schueller C."/>
            <person name="Wambutt R."/>
            <person name="Murphy G."/>
            <person name="Volckaert G."/>
            <person name="Pohl T."/>
            <person name="Duesterhoeft A."/>
            <person name="Stiekema W."/>
            <person name="Entian K.-D."/>
            <person name="Terryn N."/>
            <person name="Harris B."/>
            <person name="Ansorge W."/>
            <person name="Brandt P."/>
            <person name="Grivell L.A."/>
            <person name="Rieger M."/>
            <person name="Weichselgartner M."/>
            <person name="de Simone V."/>
            <person name="Obermaier B."/>
            <person name="Mache R."/>
            <person name="Mueller M."/>
            <person name="Kreis M."/>
            <person name="Delseny M."/>
            <person name="Puigdomenech P."/>
            <person name="Watson M."/>
            <person name="Schmidtheini T."/>
            <person name="Reichert B."/>
            <person name="Portetelle D."/>
            <person name="Perez-Alonso M."/>
            <person name="Boutry M."/>
            <person name="Bancroft I."/>
            <person name="Vos P."/>
            <person name="Hoheisel J."/>
            <person name="Zimmermann W."/>
            <person name="Wedler H."/>
            <person name="Ridley P."/>
            <person name="Langham S.-A."/>
            <person name="McCullagh B."/>
            <person name="Bilham L."/>
            <person name="Robben J."/>
            <person name="van der Schueren J."/>
            <person name="Grymonprez B."/>
            <person name="Chuang Y.-J."/>
            <person name="Vandenbussche F."/>
            <person name="Braeken M."/>
            <person name="Weltjens I."/>
            <person name="Voet M."/>
            <person name="Bastiaens I."/>
            <person name="Aert R."/>
            <person name="Defoor E."/>
            <person name="Weitzenegger T."/>
            <person name="Bothe G."/>
            <person name="Ramsperger U."/>
            <person name="Hilbert H."/>
            <person name="Braun M."/>
            <person name="Holzer E."/>
            <person name="Brandt A."/>
            <person name="Peters S."/>
            <person name="van Staveren M."/>
            <person name="Dirkse W."/>
            <person name="Mooijman P."/>
            <person name="Klein Lankhorst R."/>
            <person name="Rose M."/>
            <person name="Hauf J."/>
            <person name="Koetter P."/>
            <person name="Berneiser S."/>
            <person name="Hempel S."/>
            <person name="Feldpausch M."/>
            <person name="Lamberth S."/>
            <person name="Van den Daele H."/>
            <person name="De Keyser A."/>
            <person name="Buysshaert C."/>
            <person name="Gielen J."/>
            <person name="Villarroel R."/>
            <person name="De Clercq R."/>
            <person name="van Montagu M."/>
            <person name="Rogers J."/>
            <person name="Cronin A."/>
            <person name="Quail M.A."/>
            <person name="Bray-Allen S."/>
            <person name="Clark L."/>
            <person name="Doggett J."/>
            <person name="Hall S."/>
            <person name="Kay M."/>
            <person name="Lennard N."/>
            <person name="McLay K."/>
            <person name="Mayes R."/>
            <person name="Pettett A."/>
            <person name="Rajandream M.A."/>
            <person name="Lyne M."/>
            <person name="Benes V."/>
            <person name="Rechmann S."/>
            <person name="Borkova D."/>
            <person name="Bloecker H."/>
            <person name="Scharfe M."/>
            <person name="Grimm M."/>
            <person name="Loehnert T.-H."/>
            <person name="Dose S."/>
            <person name="de Haan M."/>
            <person name="Maarse A.C."/>
            <person name="Schaefer M."/>
            <person name="Mueller-Auer S."/>
            <person name="Gabel C."/>
            <person name="Fuchs M."/>
            <person name="Fartmann B."/>
            <person name="Granderath K."/>
            <person name="Dauner D."/>
            <person name="Herzl A."/>
            <person name="Neumann S."/>
            <person name="Argiriou A."/>
            <person name="Vitale D."/>
            <person name="Liguori R."/>
            <person name="Piravandi E."/>
            <person name="Massenet O."/>
            <person name="Quigley F."/>
            <person name="Clabauld G."/>
            <person name="Muendlein A."/>
            <person name="Felber R."/>
            <person name="Schnabl S."/>
            <person name="Hiller R."/>
            <person name="Schmidt W."/>
            <person name="Lecharny A."/>
            <person name="Aubourg S."/>
            <person name="Chefdor F."/>
            <person name="Cooke R."/>
            <person name="Berger C."/>
            <person name="Monfort A."/>
            <person name="Casacuberta E."/>
            <person name="Gibbons T."/>
            <person name="Weber N."/>
            <person name="Vandenbol M."/>
            <person name="Bargues M."/>
            <person name="Terol J."/>
            <person name="Torres A."/>
            <person name="Perez-Perez A."/>
            <person name="Purnelle B."/>
            <person name="Bent E."/>
            <person name="Johnson S."/>
            <person name="Tacon D."/>
            <person name="Jesse T."/>
            <person name="Heijnen L."/>
            <person name="Schwarz S."/>
            <person name="Scholler P."/>
            <person name="Heber S."/>
            <person name="Francs P."/>
            <person name="Bielke C."/>
            <person name="Frishman D."/>
            <person name="Haase D."/>
            <person name="Lemcke K."/>
            <person name="Mewes H.-W."/>
            <person name="Stocker S."/>
            <person name="Zaccaria P."/>
            <person name="Bevan M."/>
            <person name="Wilson R.K."/>
            <person name="de la Bastide M."/>
            <person name="Habermann K."/>
            <person name="Parnell L."/>
            <person name="Dedhia N."/>
            <person name="Gnoj L."/>
            <person name="Schutz K."/>
            <person name="Huang E."/>
            <person name="Spiegel L."/>
            <person name="Sekhon M."/>
            <person name="Murray J."/>
            <person name="Sheet P."/>
            <person name="Cordes M."/>
            <person name="Abu-Threideh J."/>
            <person name="Stoneking T."/>
            <person name="Kalicki J."/>
            <person name="Graves T."/>
            <person name="Harmon G."/>
            <person name="Edwards J."/>
            <person name="Latreille P."/>
            <person name="Courtney L."/>
            <person name="Cloud J."/>
            <person name="Abbott A."/>
            <person name="Scott K."/>
            <person name="Johnson D."/>
            <person name="Minx P."/>
            <person name="Bentley D."/>
            <person name="Fulton B."/>
            <person name="Miller N."/>
            <person name="Greco T."/>
            <person name="Kemp K."/>
            <person name="Kramer J."/>
            <person name="Fulton L."/>
            <person name="Mardis E."/>
            <person name="Dante M."/>
            <person name="Pepin K."/>
            <person name="Hillier L.W."/>
            <person name="Nelson J."/>
            <person name="Spieth J."/>
            <person name="Ryan E."/>
            <person name="Andrews S."/>
            <person name="Geisel C."/>
            <person name="Layman D."/>
            <person name="Du H."/>
            <person name="Ali J."/>
            <person name="Berghoff A."/>
            <person name="Jones K."/>
            <person name="Drone K."/>
            <person name="Cotton M."/>
            <person name="Joshu C."/>
            <person name="Antonoiu B."/>
            <person name="Zidanic M."/>
            <person name="Strong C."/>
            <person name="Sun H."/>
            <person name="Lamar B."/>
            <person name="Yordan C."/>
            <person name="Ma P."/>
            <person name="Zhong J."/>
            <person name="Preston R."/>
            <person name="Vil D."/>
            <person name="Shekher M."/>
            <person name="Matero A."/>
            <person name="Shah R."/>
            <person name="Swaby I.K."/>
            <person name="O'Shaughnessy A."/>
            <person name="Rodriguez M."/>
            <person name="Hoffman J."/>
            <person name="Till S."/>
            <person name="Granat S."/>
            <person name="Shohdy N."/>
            <person name="Hasegawa A."/>
            <person name="Hameed A."/>
            <person name="Lodhi M."/>
            <person name="Johnson A."/>
            <person name="Chen E."/>
            <person name="Marra M.A."/>
            <person name="Martienssen R."/>
            <person name="McCombie W.R."/>
        </authorList>
    </citation>
    <scope>NUCLEOTIDE SEQUENCE [LARGE SCALE GENOMIC DNA]</scope>
    <source>
        <strain>cv. Columbia</strain>
    </source>
</reference>
<reference key="2">
    <citation type="journal article" date="2017" name="Plant J.">
        <title>Araport11: a complete reannotation of the Arabidopsis thaliana reference genome.</title>
        <authorList>
            <person name="Cheng C.Y."/>
            <person name="Krishnakumar V."/>
            <person name="Chan A.P."/>
            <person name="Thibaud-Nissen F."/>
            <person name="Schobel S."/>
            <person name="Town C.D."/>
        </authorList>
    </citation>
    <scope>GENOME REANNOTATION</scope>
    <source>
        <strain>cv. Columbia</strain>
    </source>
</reference>
<reference key="3">
    <citation type="journal article" date="2003" name="Science">
        <title>Empirical analysis of transcriptional activity in the Arabidopsis genome.</title>
        <authorList>
            <person name="Yamada K."/>
            <person name="Lim J."/>
            <person name="Dale J.M."/>
            <person name="Chen H."/>
            <person name="Shinn P."/>
            <person name="Palm C.J."/>
            <person name="Southwick A.M."/>
            <person name="Wu H.C."/>
            <person name="Kim C.J."/>
            <person name="Nguyen M."/>
            <person name="Pham P.K."/>
            <person name="Cheuk R.F."/>
            <person name="Karlin-Newmann G."/>
            <person name="Liu S.X."/>
            <person name="Lam B."/>
            <person name="Sakano H."/>
            <person name="Wu T."/>
            <person name="Yu G."/>
            <person name="Miranda M."/>
            <person name="Quach H.L."/>
            <person name="Tripp M."/>
            <person name="Chang C.H."/>
            <person name="Lee J.M."/>
            <person name="Toriumi M.J."/>
            <person name="Chan M.M."/>
            <person name="Tang C.C."/>
            <person name="Onodera C.S."/>
            <person name="Deng J.M."/>
            <person name="Akiyama K."/>
            <person name="Ansari Y."/>
            <person name="Arakawa T."/>
            <person name="Banh J."/>
            <person name="Banno F."/>
            <person name="Bowser L."/>
            <person name="Brooks S.Y."/>
            <person name="Carninci P."/>
            <person name="Chao Q."/>
            <person name="Choy N."/>
            <person name="Enju A."/>
            <person name="Goldsmith A.D."/>
            <person name="Gurjal M."/>
            <person name="Hansen N.F."/>
            <person name="Hayashizaki Y."/>
            <person name="Johnson-Hopson C."/>
            <person name="Hsuan V.W."/>
            <person name="Iida K."/>
            <person name="Karnes M."/>
            <person name="Khan S."/>
            <person name="Koesema E."/>
            <person name="Ishida J."/>
            <person name="Jiang P.X."/>
            <person name="Jones T."/>
            <person name="Kawai J."/>
            <person name="Kamiya A."/>
            <person name="Meyers C."/>
            <person name="Nakajima M."/>
            <person name="Narusaka M."/>
            <person name="Seki M."/>
            <person name="Sakurai T."/>
            <person name="Satou M."/>
            <person name="Tamse R."/>
            <person name="Vaysberg M."/>
            <person name="Wallender E.K."/>
            <person name="Wong C."/>
            <person name="Yamamura Y."/>
            <person name="Yuan S."/>
            <person name="Shinozaki K."/>
            <person name="Davis R.W."/>
            <person name="Theologis A."/>
            <person name="Ecker J.R."/>
        </authorList>
    </citation>
    <scope>NUCLEOTIDE SEQUENCE [LARGE SCALE MRNA]</scope>
    <source>
        <strain>cv. Columbia</strain>
    </source>
</reference>
<reference key="4">
    <citation type="journal article" date="2001" name="Proc. Natl. Acad. Sci. U.S.A.">
        <title>BRS1, a serine carboxypeptidase, regulates BRI1 signaling in Arabidopsis thaliana.</title>
        <authorList>
            <person name="Li J."/>
            <person name="Lease K.A."/>
            <person name="Tax F.E."/>
            <person name="Walker J.C."/>
        </authorList>
    </citation>
    <scope>FUNCTION</scope>
    <scope>MUTAGENESIS OF SER-181 AND HIS-438</scope>
</reference>
<reference key="5">
    <citation type="journal article" date="2005" name="J. Biol. Chem.">
        <title>Arabidopsis BRS1 is a secreted and active serine carboxypeptidase.</title>
        <authorList>
            <person name="Zhou A."/>
            <person name="Li J."/>
        </authorList>
    </citation>
    <scope>FUNCTION</scope>
    <scope>ACTIVITY REGULATION</scope>
    <scope>BIOPHYSICOCHEMICAL PROPERTIES</scope>
    <scope>SUBCELLULAR LOCATION</scope>
    <scope>TISSUE SPECIFICITY</scope>
    <scope>GLYCOSYLATION</scope>
    <scope>MUTAGENESIS OF HIS-438</scope>
</reference>
<reference key="6">
    <citation type="journal article" date="2005" name="Plant Physiol.">
        <title>An expression and bioinformatics analysis of the Arabidopsis serine carboxypeptidase-like gene family.</title>
        <authorList>
            <person name="Fraser C.M."/>
            <person name="Rider L.W."/>
            <person name="Chapple C."/>
        </authorList>
    </citation>
    <scope>GENE FAMILY</scope>
    <scope>TISSUE SPECIFICITY</scope>
    <scope>NOMENCLATURE</scope>
</reference>
<reference key="7">
    <citation type="journal article" date="2007" name="Mol. Cell. Proteomics">
        <title>Multidimensional protein identification technology (MudPIT) analysis of ubiquitinated proteins in plants.</title>
        <authorList>
            <person name="Maor R."/>
            <person name="Jones A."/>
            <person name="Nuehse T.S."/>
            <person name="Studholme D.J."/>
            <person name="Peck S.C."/>
            <person name="Shirasu K."/>
        </authorList>
    </citation>
    <scope>IDENTIFICATION BY MASS SPECTROMETRY [LARGE SCALE ANALYSIS]</scope>
    <source>
        <strain>cv. Landsberg erecta</strain>
    </source>
</reference>